<feature type="chain" id="PRO_0000051327" description="U3 small nucleolar RNA-associated protein 15 homolog">
    <location>
        <begin position="1"/>
        <end position="515"/>
    </location>
</feature>
<feature type="repeat" description="WD 1">
    <location>
        <begin position="36"/>
        <end position="75"/>
    </location>
</feature>
<feature type="repeat" description="WD 2">
    <location>
        <begin position="78"/>
        <end position="117"/>
    </location>
</feature>
<feature type="repeat" description="WD 3">
    <location>
        <begin position="120"/>
        <end position="159"/>
    </location>
</feature>
<feature type="repeat" description="WD 4">
    <location>
        <begin position="162"/>
        <end position="202"/>
    </location>
</feature>
<feature type="repeat" description="WD 5">
    <location>
        <begin position="204"/>
        <end position="242"/>
    </location>
</feature>
<feature type="repeat" description="WD 6">
    <location>
        <begin position="246"/>
        <end position="285"/>
    </location>
</feature>
<feature type="repeat" description="WD 7">
    <location>
        <begin position="287"/>
        <end position="326"/>
    </location>
</feature>
<comment type="function">
    <text evidence="1">Ribosome biogenesis factor. Involved in nucleolar processing of pre-18S ribosomal RNA. Required for optimal pre-ribosomal RNA transcription by RNA polymerase I. Part of the small subunit (SSU) processome, first precursor of the small eukaryotic ribosomal subunit. During the assembly of the SSU processome in the nucleolus, many ribosome biogenesis factors, an RNA chaperone and ribosomal proteins associate with the nascent pre-rRNA and work in concert to generate RNA folding, modifications, rearrangements and cleavage as well as targeted degradation of pre-ribosomal RNA by the RNA exosome.</text>
</comment>
<comment type="subunit">
    <text evidence="1">Part of the small subunit (SSU) processome, composed of more than 70 proteins and the RNA chaperone small nucleolar RNA (snoRNA) U3. May be a component of the proposed t-UTP subcomplex of the ribosomal small subunit (SSU) processome.</text>
</comment>
<comment type="subcellular location">
    <subcellularLocation>
        <location evidence="1">Nucleus</location>
        <location evidence="1">Nucleolus</location>
    </subcellularLocation>
</comment>
<sequence length="515" mass="58267">MSGYKPVAIPTYPKLGEKITQDTLYWKRYKTPVQIKEFGAVTKIHFSPVQPCTYAVTSSTRIHLYGQYSQEPIKTFSRFKDTAYCGTFRGDGKLLAAGCEDSVVQLFDISGKAALRQFSGHSKAVHFVDFTADKYRIVSGSDDYTSRLWDIPNGVEITSYNEHTDYIRCGCTSALNNDLFATGSYDHTIKIFDGRTDKSVMSMDHGQPVESVLLFPSGGLLVSAGGRYVKVWDILKGGQLLVSLRNHHKTVTSLCLSSSGQRLLSASLDRHVKVYSTMNYKVVHSFDYAASILSLALAPDDQMIVVGMTNGVLNIKHRKPEERKQLQSTTKRHPRYRVFVRGKDYMPKQDDIFISKPVIAHLKKYDKLLKGFHMTEALDTVLQPQIRNQRPEVTVAVMNELKRRGTLKNALAGRNEKQLSDLLIFLLKHLVNPQFVPILLNVAEHIIDIYSPVVGQSSVIYKQFIRLQEVLEKEINYQEELLKMLGMMDTLFATMTTKKESPWEEPKPILPLSSQ</sequence>
<organism>
    <name type="scientific">Xenopus tropicalis</name>
    <name type="common">Western clawed frog</name>
    <name type="synonym">Silurana tropicalis</name>
    <dbReference type="NCBI Taxonomy" id="8364"/>
    <lineage>
        <taxon>Eukaryota</taxon>
        <taxon>Metazoa</taxon>
        <taxon>Chordata</taxon>
        <taxon>Craniata</taxon>
        <taxon>Vertebrata</taxon>
        <taxon>Euteleostomi</taxon>
        <taxon>Amphibia</taxon>
        <taxon>Batrachia</taxon>
        <taxon>Anura</taxon>
        <taxon>Pipoidea</taxon>
        <taxon>Pipidae</taxon>
        <taxon>Xenopodinae</taxon>
        <taxon>Xenopus</taxon>
        <taxon>Silurana</taxon>
    </lineage>
</organism>
<protein>
    <recommendedName>
        <fullName>U3 small nucleolar RNA-associated protein 15 homolog</fullName>
    </recommendedName>
</protein>
<gene>
    <name type="primary">utp15</name>
</gene>
<proteinExistence type="evidence at transcript level"/>
<reference key="1">
    <citation type="submission" date="2004-10" db="EMBL/GenBank/DDBJ databases">
        <authorList>
            <consortium name="NIH - Xenopus Gene Collection (XGC) project"/>
        </authorList>
    </citation>
    <scope>NUCLEOTIDE SEQUENCE [LARGE SCALE MRNA]</scope>
    <source>
        <tissue>Embryo</tissue>
    </source>
</reference>
<evidence type="ECO:0000250" key="1">
    <source>
        <dbReference type="UniProtKB" id="Q8TED0"/>
    </source>
</evidence>
<name>UTP15_XENTR</name>
<keyword id="KW-0539">Nucleus</keyword>
<keyword id="KW-1185">Reference proteome</keyword>
<keyword id="KW-0677">Repeat</keyword>
<keyword id="KW-0698">rRNA processing</keyword>
<keyword id="KW-0853">WD repeat</keyword>
<accession>Q5XGE2</accession>
<dbReference type="EMBL" id="BC084500">
    <property type="protein sequence ID" value="AAH84500.1"/>
    <property type="molecule type" value="mRNA"/>
</dbReference>
<dbReference type="RefSeq" id="NP_001011103.1">
    <property type="nucleotide sequence ID" value="NM_001011103.1"/>
</dbReference>
<dbReference type="SMR" id="Q5XGE2"/>
<dbReference type="FunCoup" id="Q5XGE2">
    <property type="interactions" value="3189"/>
</dbReference>
<dbReference type="STRING" id="8364.ENSXETP00000040353"/>
<dbReference type="PaxDb" id="8364-ENSXETP00000059937"/>
<dbReference type="DNASU" id="496516"/>
<dbReference type="GeneID" id="496516"/>
<dbReference type="KEGG" id="xtr:496516"/>
<dbReference type="AGR" id="Xenbase:XB-GENE-491403"/>
<dbReference type="CTD" id="84135"/>
<dbReference type="Xenbase" id="XB-GENE-491403">
    <property type="gene designation" value="utp15"/>
</dbReference>
<dbReference type="eggNOG" id="KOG0310">
    <property type="taxonomic scope" value="Eukaryota"/>
</dbReference>
<dbReference type="InParanoid" id="Q5XGE2"/>
<dbReference type="OMA" id="ATYQVVH"/>
<dbReference type="OrthoDB" id="431715at2759"/>
<dbReference type="Proteomes" id="UP000008143">
    <property type="component" value="Chromosome 1"/>
</dbReference>
<dbReference type="GO" id="GO:0005730">
    <property type="term" value="C:nucleolus"/>
    <property type="evidence" value="ECO:0007669"/>
    <property type="project" value="UniProtKB-SubCell"/>
</dbReference>
<dbReference type="GO" id="GO:0032040">
    <property type="term" value="C:small-subunit processome"/>
    <property type="evidence" value="ECO:0000250"/>
    <property type="project" value="UniProtKB"/>
</dbReference>
<dbReference type="GO" id="GO:0042274">
    <property type="term" value="P:ribosomal small subunit biogenesis"/>
    <property type="evidence" value="ECO:0000250"/>
    <property type="project" value="UniProtKB"/>
</dbReference>
<dbReference type="GO" id="GO:0006364">
    <property type="term" value="P:rRNA processing"/>
    <property type="evidence" value="ECO:0007669"/>
    <property type="project" value="UniProtKB-KW"/>
</dbReference>
<dbReference type="CDD" id="cd00200">
    <property type="entry name" value="WD40"/>
    <property type="match status" value="1"/>
</dbReference>
<dbReference type="FunFam" id="2.130.10.10:FF:000978">
    <property type="entry name" value="U3 small nucleolar RNA-associated protein 15 homolog"/>
    <property type="match status" value="1"/>
</dbReference>
<dbReference type="FunFam" id="2.130.10.10:FF:002002">
    <property type="entry name" value="U3 small nucleolar RNA-associated protein 15 homolog"/>
    <property type="match status" value="1"/>
</dbReference>
<dbReference type="Gene3D" id="2.130.10.10">
    <property type="entry name" value="YVTN repeat-like/Quinoprotein amine dehydrogenase"/>
    <property type="match status" value="2"/>
</dbReference>
<dbReference type="InterPro" id="IPR018983">
    <property type="entry name" value="U3_snoRNA-assocProt_15_C"/>
</dbReference>
<dbReference type="InterPro" id="IPR015943">
    <property type="entry name" value="WD40/YVTN_repeat-like_dom_sf"/>
</dbReference>
<dbReference type="InterPro" id="IPR019775">
    <property type="entry name" value="WD40_repeat_CS"/>
</dbReference>
<dbReference type="InterPro" id="IPR036322">
    <property type="entry name" value="WD40_repeat_dom_sf"/>
</dbReference>
<dbReference type="InterPro" id="IPR001680">
    <property type="entry name" value="WD40_rpt"/>
</dbReference>
<dbReference type="PANTHER" id="PTHR19924:SF26">
    <property type="entry name" value="U3 SMALL NUCLEOLAR RNA-ASSOCIATED PROTEIN 15 HOMOLOG"/>
    <property type="match status" value="1"/>
</dbReference>
<dbReference type="PANTHER" id="PTHR19924">
    <property type="entry name" value="UTP15 U3 SMALL NUCLEOLAR RNA-ASSOCIATED PROTEIN 15 FAMILY MEMBER"/>
    <property type="match status" value="1"/>
</dbReference>
<dbReference type="Pfam" id="PF09384">
    <property type="entry name" value="UTP15_C"/>
    <property type="match status" value="1"/>
</dbReference>
<dbReference type="Pfam" id="PF00400">
    <property type="entry name" value="WD40"/>
    <property type="match status" value="4"/>
</dbReference>
<dbReference type="SMART" id="SM00320">
    <property type="entry name" value="WD40"/>
    <property type="match status" value="7"/>
</dbReference>
<dbReference type="SUPFAM" id="SSF50978">
    <property type="entry name" value="WD40 repeat-like"/>
    <property type="match status" value="1"/>
</dbReference>
<dbReference type="PROSITE" id="PS00678">
    <property type="entry name" value="WD_REPEATS_1"/>
    <property type="match status" value="1"/>
</dbReference>
<dbReference type="PROSITE" id="PS50082">
    <property type="entry name" value="WD_REPEATS_2"/>
    <property type="match status" value="2"/>
</dbReference>
<dbReference type="PROSITE" id="PS50294">
    <property type="entry name" value="WD_REPEATS_REGION"/>
    <property type="match status" value="1"/>
</dbReference>